<name>LDH_MACCJ</name>
<protein>
    <recommendedName>
        <fullName evidence="1">L-lactate dehydrogenase</fullName>
        <shortName evidence="1">L-LDH</shortName>
        <ecNumber evidence="1">1.1.1.27</ecNumber>
    </recommendedName>
</protein>
<dbReference type="EC" id="1.1.1.27" evidence="1"/>
<dbReference type="EMBL" id="AP009484">
    <property type="protein sequence ID" value="BAH16870.1"/>
    <property type="molecule type" value="Genomic_DNA"/>
</dbReference>
<dbReference type="RefSeq" id="WP_012656074.1">
    <property type="nucleotide sequence ID" value="NC_011999.1"/>
</dbReference>
<dbReference type="SMR" id="B9E9F9"/>
<dbReference type="STRING" id="458233.MCCL_0163"/>
<dbReference type="GeneID" id="61130581"/>
<dbReference type="KEGG" id="mcl:MCCL_0163"/>
<dbReference type="eggNOG" id="COG0039">
    <property type="taxonomic scope" value="Bacteria"/>
</dbReference>
<dbReference type="HOGENOM" id="CLU_045401_1_1_9"/>
<dbReference type="OrthoDB" id="9802969at2"/>
<dbReference type="UniPathway" id="UPA00554">
    <property type="reaction ID" value="UER00611"/>
</dbReference>
<dbReference type="Proteomes" id="UP000001383">
    <property type="component" value="Chromosome"/>
</dbReference>
<dbReference type="GO" id="GO:0005737">
    <property type="term" value="C:cytoplasm"/>
    <property type="evidence" value="ECO:0007669"/>
    <property type="project" value="UniProtKB-SubCell"/>
</dbReference>
<dbReference type="GO" id="GO:0004459">
    <property type="term" value="F:L-lactate dehydrogenase activity"/>
    <property type="evidence" value="ECO:0007669"/>
    <property type="project" value="UniProtKB-UniRule"/>
</dbReference>
<dbReference type="GO" id="GO:0006096">
    <property type="term" value="P:glycolytic process"/>
    <property type="evidence" value="ECO:0007669"/>
    <property type="project" value="UniProtKB-UniRule"/>
</dbReference>
<dbReference type="GO" id="GO:0006089">
    <property type="term" value="P:lactate metabolic process"/>
    <property type="evidence" value="ECO:0007669"/>
    <property type="project" value="TreeGrafter"/>
</dbReference>
<dbReference type="CDD" id="cd05291">
    <property type="entry name" value="HicDH_like"/>
    <property type="match status" value="1"/>
</dbReference>
<dbReference type="FunFam" id="3.40.50.720:FF:000018">
    <property type="entry name" value="Malate dehydrogenase"/>
    <property type="match status" value="1"/>
</dbReference>
<dbReference type="Gene3D" id="3.90.110.10">
    <property type="entry name" value="Lactate dehydrogenase/glycoside hydrolase, family 4, C-terminal"/>
    <property type="match status" value="1"/>
</dbReference>
<dbReference type="Gene3D" id="3.40.50.720">
    <property type="entry name" value="NAD(P)-binding Rossmann-like Domain"/>
    <property type="match status" value="1"/>
</dbReference>
<dbReference type="HAMAP" id="MF_00488">
    <property type="entry name" value="Lactate_dehydrog"/>
    <property type="match status" value="1"/>
</dbReference>
<dbReference type="InterPro" id="IPR001557">
    <property type="entry name" value="L-lactate/malate_DH"/>
</dbReference>
<dbReference type="InterPro" id="IPR011304">
    <property type="entry name" value="L-lactate_DH"/>
</dbReference>
<dbReference type="InterPro" id="IPR018177">
    <property type="entry name" value="L-lactate_DH_AS"/>
</dbReference>
<dbReference type="InterPro" id="IPR022383">
    <property type="entry name" value="Lactate/malate_DH_C"/>
</dbReference>
<dbReference type="InterPro" id="IPR001236">
    <property type="entry name" value="Lactate/malate_DH_N"/>
</dbReference>
<dbReference type="InterPro" id="IPR015955">
    <property type="entry name" value="Lactate_DH/Glyco_Ohase_4_C"/>
</dbReference>
<dbReference type="InterPro" id="IPR036291">
    <property type="entry name" value="NAD(P)-bd_dom_sf"/>
</dbReference>
<dbReference type="NCBIfam" id="TIGR01771">
    <property type="entry name" value="L-LDH-NAD"/>
    <property type="match status" value="1"/>
</dbReference>
<dbReference type="NCBIfam" id="NF000824">
    <property type="entry name" value="PRK00066.1"/>
    <property type="match status" value="1"/>
</dbReference>
<dbReference type="NCBIfam" id="NF004863">
    <property type="entry name" value="PRK06223.1"/>
    <property type="match status" value="1"/>
</dbReference>
<dbReference type="PANTHER" id="PTHR43128">
    <property type="entry name" value="L-2-HYDROXYCARBOXYLATE DEHYDROGENASE (NAD(P)(+))"/>
    <property type="match status" value="1"/>
</dbReference>
<dbReference type="PANTHER" id="PTHR43128:SF16">
    <property type="entry name" value="L-LACTATE DEHYDROGENASE"/>
    <property type="match status" value="1"/>
</dbReference>
<dbReference type="Pfam" id="PF02866">
    <property type="entry name" value="Ldh_1_C"/>
    <property type="match status" value="1"/>
</dbReference>
<dbReference type="Pfam" id="PF00056">
    <property type="entry name" value="Ldh_1_N"/>
    <property type="match status" value="1"/>
</dbReference>
<dbReference type="PIRSF" id="PIRSF000102">
    <property type="entry name" value="Lac_mal_DH"/>
    <property type="match status" value="1"/>
</dbReference>
<dbReference type="PRINTS" id="PR00086">
    <property type="entry name" value="LLDHDRGNASE"/>
</dbReference>
<dbReference type="SUPFAM" id="SSF56327">
    <property type="entry name" value="LDH C-terminal domain-like"/>
    <property type="match status" value="1"/>
</dbReference>
<dbReference type="SUPFAM" id="SSF51735">
    <property type="entry name" value="NAD(P)-binding Rossmann-fold domains"/>
    <property type="match status" value="1"/>
</dbReference>
<dbReference type="PROSITE" id="PS00064">
    <property type="entry name" value="L_LDH"/>
    <property type="match status" value="1"/>
</dbReference>
<proteinExistence type="inferred from homology"/>
<accession>B9E9F9</accession>
<keyword id="KW-0021">Allosteric enzyme</keyword>
<keyword id="KW-0963">Cytoplasm</keyword>
<keyword id="KW-0520">NAD</keyword>
<keyword id="KW-0560">Oxidoreductase</keyword>
<keyword id="KW-0597">Phosphoprotein</keyword>
<keyword id="KW-1185">Reference proteome</keyword>
<organism>
    <name type="scientific">Macrococcus caseolyticus (strain JCSC5402)</name>
    <name type="common">Macrococcoides caseolyticum</name>
    <dbReference type="NCBI Taxonomy" id="458233"/>
    <lineage>
        <taxon>Bacteria</taxon>
        <taxon>Bacillati</taxon>
        <taxon>Bacillota</taxon>
        <taxon>Bacilli</taxon>
        <taxon>Bacillales</taxon>
        <taxon>Staphylococcaceae</taxon>
        <taxon>Macrococcoides</taxon>
    </lineage>
</organism>
<evidence type="ECO:0000255" key="1">
    <source>
        <dbReference type="HAMAP-Rule" id="MF_00488"/>
    </source>
</evidence>
<comment type="function">
    <text evidence="1">Catalyzes the conversion of lactate to pyruvate.</text>
</comment>
<comment type="catalytic activity">
    <reaction evidence="1">
        <text>(S)-lactate + NAD(+) = pyruvate + NADH + H(+)</text>
        <dbReference type="Rhea" id="RHEA:23444"/>
        <dbReference type="ChEBI" id="CHEBI:15361"/>
        <dbReference type="ChEBI" id="CHEBI:15378"/>
        <dbReference type="ChEBI" id="CHEBI:16651"/>
        <dbReference type="ChEBI" id="CHEBI:57540"/>
        <dbReference type="ChEBI" id="CHEBI:57945"/>
        <dbReference type="EC" id="1.1.1.27"/>
    </reaction>
</comment>
<comment type="activity regulation">
    <text evidence="1">Allosterically activated by fructose 1,6-bisphosphate (FBP).</text>
</comment>
<comment type="pathway">
    <text evidence="1">Fermentation; pyruvate fermentation to lactate; (S)-lactate from pyruvate: step 1/1.</text>
</comment>
<comment type="subunit">
    <text evidence="1">Homotetramer.</text>
</comment>
<comment type="subcellular location">
    <subcellularLocation>
        <location evidence="1">Cytoplasm</location>
    </subcellularLocation>
</comment>
<comment type="similarity">
    <text evidence="1">Belongs to the LDH/MDH superfamily. LDH family.</text>
</comment>
<gene>
    <name evidence="1" type="primary">ldh</name>
    <name type="ordered locus">MCCL_0163</name>
</gene>
<reference key="1">
    <citation type="journal article" date="2009" name="J. Bacteriol.">
        <title>Complete genome sequence of Macrococcus caseolyticus strain JCSCS5402, reflecting the ancestral genome of the human-pathogenic staphylococci.</title>
        <authorList>
            <person name="Baba T."/>
            <person name="Kuwahara-Arai K."/>
            <person name="Uchiyama I."/>
            <person name="Takeuchi F."/>
            <person name="Ito T."/>
            <person name="Hiramatsu K."/>
        </authorList>
    </citation>
    <scope>NUCLEOTIDE SEQUENCE [LARGE SCALE GENOMIC DNA]</scope>
    <source>
        <strain>JCSC5402</strain>
    </source>
</reference>
<sequence length="315" mass="34366">MEKFKGNKVVLVGNGAVGSSYAFAMLNQGACDEFVIIDLNEDKAKGDAMDLNHGVVYAPSPMQVKYGTYEDCHDASLIVICAGAAQKPGETRLDLVGKNMKIFKSIVDEIMKSGFDGIFLIATNPVDVLTYAVQKFSGLPENQVIGSGTILDTARFRHLLSQEFNVSPNSVHGYIIGEHGDSELAVWSGTNIAGNSLYDILNENPEKQKLIEEIFVNTRDAAYEIIKAKGATYYGVAMGLMRISKAILNNENVVLTVSAKLNGEYGHDDVYIGVPAIINRNGIREVLETPLNTEEKEKFAKSVETLKAIQTPFFS</sequence>
<feature type="chain" id="PRO_1000190776" description="L-lactate dehydrogenase">
    <location>
        <begin position="1"/>
        <end position="315"/>
    </location>
</feature>
<feature type="active site" description="Proton acceptor" evidence="1">
    <location>
        <position position="179"/>
    </location>
</feature>
<feature type="binding site" evidence="1">
    <location>
        <position position="17"/>
    </location>
    <ligand>
        <name>NAD(+)</name>
        <dbReference type="ChEBI" id="CHEBI:57540"/>
    </ligand>
</feature>
<feature type="binding site" evidence="1">
    <location>
        <position position="38"/>
    </location>
    <ligand>
        <name>NAD(+)</name>
        <dbReference type="ChEBI" id="CHEBI:57540"/>
    </ligand>
</feature>
<feature type="binding site" evidence="1">
    <location>
        <position position="43"/>
    </location>
    <ligand>
        <name>NAD(+)</name>
        <dbReference type="ChEBI" id="CHEBI:57540"/>
    </ligand>
</feature>
<feature type="binding site" evidence="1">
    <location>
        <position position="69"/>
    </location>
    <ligand>
        <name>NAD(+)</name>
        <dbReference type="ChEBI" id="CHEBI:57540"/>
    </ligand>
</feature>
<feature type="binding site" evidence="1">
    <location>
        <begin position="83"/>
        <end position="84"/>
    </location>
    <ligand>
        <name>NAD(+)</name>
        <dbReference type="ChEBI" id="CHEBI:57540"/>
    </ligand>
</feature>
<feature type="binding site" evidence="1">
    <location>
        <position position="86"/>
    </location>
    <ligand>
        <name>substrate</name>
    </ligand>
</feature>
<feature type="binding site" evidence="1">
    <location>
        <position position="92"/>
    </location>
    <ligand>
        <name>substrate</name>
    </ligand>
</feature>
<feature type="binding site" evidence="1">
    <location>
        <position position="105"/>
    </location>
    <ligand>
        <name>NAD(+)</name>
        <dbReference type="ChEBI" id="CHEBI:57540"/>
    </ligand>
</feature>
<feature type="binding site" evidence="1">
    <location>
        <begin position="122"/>
        <end position="124"/>
    </location>
    <ligand>
        <name>NAD(+)</name>
        <dbReference type="ChEBI" id="CHEBI:57540"/>
    </ligand>
</feature>
<feature type="binding site" evidence="1">
    <location>
        <begin position="124"/>
        <end position="127"/>
    </location>
    <ligand>
        <name>substrate</name>
    </ligand>
</feature>
<feature type="binding site" evidence="1">
    <location>
        <position position="147"/>
    </location>
    <ligand>
        <name>NAD(+)</name>
        <dbReference type="ChEBI" id="CHEBI:57540"/>
    </ligand>
</feature>
<feature type="binding site" evidence="1">
    <location>
        <begin position="152"/>
        <end position="155"/>
    </location>
    <ligand>
        <name>substrate</name>
    </ligand>
</feature>
<feature type="binding site" evidence="1">
    <location>
        <position position="157"/>
    </location>
    <ligand>
        <name>beta-D-fructose 1,6-bisphosphate</name>
        <dbReference type="ChEBI" id="CHEBI:32966"/>
        <note>allosteric activator</note>
    </ligand>
</feature>
<feature type="binding site" evidence="1">
    <location>
        <position position="172"/>
    </location>
    <ligand>
        <name>beta-D-fructose 1,6-bisphosphate</name>
        <dbReference type="ChEBI" id="CHEBI:32966"/>
        <note>allosteric activator</note>
    </ligand>
</feature>
<feature type="binding site" evidence="1">
    <location>
        <position position="232"/>
    </location>
    <ligand>
        <name>substrate</name>
    </ligand>
</feature>
<feature type="modified residue" description="Phosphotyrosine" evidence="1">
    <location>
        <position position="223"/>
    </location>
</feature>